<comment type="function">
    <text evidence="1">High affinity, high specificity proton-dependent sulfate transporter, which mediates sulfate uptake. Provides the sulfur source for the cysteine synthesis pathway.</text>
</comment>
<comment type="subcellular location">
    <subcellularLocation>
        <location evidence="1">Cell inner membrane</location>
        <topology evidence="1">Multi-pass membrane protein</topology>
    </subcellularLocation>
</comment>
<comment type="similarity">
    <text evidence="1">Belongs to the CysZ family.</text>
</comment>
<feature type="chain" id="PRO_1000206333" description="Sulfate transporter CysZ">
    <location>
        <begin position="1"/>
        <end position="255"/>
    </location>
</feature>
<feature type="transmembrane region" description="Helical" evidence="1">
    <location>
        <begin position="26"/>
        <end position="46"/>
    </location>
</feature>
<feature type="transmembrane region" description="Helical" evidence="1">
    <location>
        <begin position="71"/>
        <end position="91"/>
    </location>
</feature>
<feature type="transmembrane region" description="Helical" evidence="1">
    <location>
        <begin position="150"/>
        <end position="170"/>
    </location>
</feature>
<feature type="transmembrane region" description="Helical" evidence="1">
    <location>
        <begin position="211"/>
        <end position="231"/>
    </location>
</feature>
<protein>
    <recommendedName>
        <fullName evidence="1">Sulfate transporter CysZ</fullName>
    </recommendedName>
</protein>
<accession>C3K1X0</accession>
<gene>
    <name evidence="1" type="primary">cysZ</name>
    <name type="ordered locus">PFLU_5163</name>
</gene>
<evidence type="ECO:0000255" key="1">
    <source>
        <dbReference type="HAMAP-Rule" id="MF_00468"/>
    </source>
</evidence>
<organism>
    <name type="scientific">Pseudomonas fluorescens (strain SBW25)</name>
    <dbReference type="NCBI Taxonomy" id="216595"/>
    <lineage>
        <taxon>Bacteria</taxon>
        <taxon>Pseudomonadati</taxon>
        <taxon>Pseudomonadota</taxon>
        <taxon>Gammaproteobacteria</taxon>
        <taxon>Pseudomonadales</taxon>
        <taxon>Pseudomonadaceae</taxon>
        <taxon>Pseudomonas</taxon>
    </lineage>
</organism>
<sequence>MPAPALSGPQYLREGLKLVLSPGLRLFVLLPLAINLVLFVGLIYFAGHQFSLWVDHLMPTLPSWLSFLNYLLWPLFVVLVVLMVFFTFTMLANIIAAPFNGFLSEKVEVVVRGTDDFPAFSWGELIAMVPRTLAREMRKLGYFLPRAIGLFILSFIPVVNLIAAPLWLLFGVWMMAIQYIDYPADNHKLGWNEMLAWLRQKRWQSMSFGGIVYLVLLVPVVNLLMMPAAVAGATLFWVREQGAEAMAPQQKVTRS</sequence>
<keyword id="KW-0028">Amino-acid biosynthesis</keyword>
<keyword id="KW-0997">Cell inner membrane</keyword>
<keyword id="KW-1003">Cell membrane</keyword>
<keyword id="KW-0198">Cysteine biosynthesis</keyword>
<keyword id="KW-0472">Membrane</keyword>
<keyword id="KW-0764">Sulfate transport</keyword>
<keyword id="KW-0812">Transmembrane</keyword>
<keyword id="KW-1133">Transmembrane helix</keyword>
<keyword id="KW-0813">Transport</keyword>
<dbReference type="EMBL" id="AM181176">
    <property type="protein sequence ID" value="CAY52209.1"/>
    <property type="molecule type" value="Genomic_DNA"/>
</dbReference>
<dbReference type="RefSeq" id="WP_015885837.1">
    <property type="nucleotide sequence ID" value="NC_012660.1"/>
</dbReference>
<dbReference type="SMR" id="C3K1X0"/>
<dbReference type="STRING" id="294.SRM1_00933"/>
<dbReference type="GeneID" id="93466786"/>
<dbReference type="PATRIC" id="fig|216595.4.peg.5295"/>
<dbReference type="eggNOG" id="COG2981">
    <property type="taxonomic scope" value="Bacteria"/>
</dbReference>
<dbReference type="HOGENOM" id="CLU_070331_1_0_6"/>
<dbReference type="OrthoDB" id="5292355at2"/>
<dbReference type="GO" id="GO:0005886">
    <property type="term" value="C:plasma membrane"/>
    <property type="evidence" value="ECO:0007669"/>
    <property type="project" value="UniProtKB-SubCell"/>
</dbReference>
<dbReference type="GO" id="GO:0009675">
    <property type="term" value="F:high-affinity sulfate:proton symporter activity"/>
    <property type="evidence" value="ECO:0007669"/>
    <property type="project" value="TreeGrafter"/>
</dbReference>
<dbReference type="GO" id="GO:0019344">
    <property type="term" value="P:cysteine biosynthetic process"/>
    <property type="evidence" value="ECO:0007669"/>
    <property type="project" value="UniProtKB-UniRule"/>
</dbReference>
<dbReference type="GO" id="GO:0000103">
    <property type="term" value="P:sulfate assimilation"/>
    <property type="evidence" value="ECO:0007669"/>
    <property type="project" value="InterPro"/>
</dbReference>
<dbReference type="HAMAP" id="MF_00468">
    <property type="entry name" value="CysZ"/>
    <property type="match status" value="1"/>
</dbReference>
<dbReference type="InterPro" id="IPR050480">
    <property type="entry name" value="CysZ_sulfate_transptr"/>
</dbReference>
<dbReference type="InterPro" id="IPR022985">
    <property type="entry name" value="Sulfate_CysZ"/>
</dbReference>
<dbReference type="NCBIfam" id="NF003433">
    <property type="entry name" value="PRK04949.1"/>
    <property type="match status" value="1"/>
</dbReference>
<dbReference type="PANTHER" id="PTHR37468">
    <property type="entry name" value="SULFATE TRANSPORTER CYSZ"/>
    <property type="match status" value="1"/>
</dbReference>
<dbReference type="PANTHER" id="PTHR37468:SF1">
    <property type="entry name" value="SULFATE TRANSPORTER CYSZ"/>
    <property type="match status" value="1"/>
</dbReference>
<dbReference type="Pfam" id="PF07264">
    <property type="entry name" value="EI24"/>
    <property type="match status" value="1"/>
</dbReference>
<reference key="1">
    <citation type="journal article" date="2009" name="Genome Biol.">
        <title>Genomic and genetic analyses of diversity and plant interactions of Pseudomonas fluorescens.</title>
        <authorList>
            <person name="Silby M.W."/>
            <person name="Cerdeno-Tarraga A.M."/>
            <person name="Vernikos G.S."/>
            <person name="Giddens S.R."/>
            <person name="Jackson R.W."/>
            <person name="Preston G.M."/>
            <person name="Zhang X.-X."/>
            <person name="Moon C.D."/>
            <person name="Gehrig S.M."/>
            <person name="Godfrey S.A.C."/>
            <person name="Knight C.G."/>
            <person name="Malone J.G."/>
            <person name="Robinson Z."/>
            <person name="Spiers A.J."/>
            <person name="Harris S."/>
            <person name="Challis G.L."/>
            <person name="Yaxley A.M."/>
            <person name="Harris D."/>
            <person name="Seeger K."/>
            <person name="Murphy L."/>
            <person name="Rutter S."/>
            <person name="Squares R."/>
            <person name="Quail M.A."/>
            <person name="Saunders E."/>
            <person name="Mavromatis K."/>
            <person name="Brettin T.S."/>
            <person name="Bentley S.D."/>
            <person name="Hothersall J."/>
            <person name="Stephens E."/>
            <person name="Thomas C.M."/>
            <person name="Parkhill J."/>
            <person name="Levy S.B."/>
            <person name="Rainey P.B."/>
            <person name="Thomson N.R."/>
        </authorList>
    </citation>
    <scope>NUCLEOTIDE SEQUENCE [LARGE SCALE GENOMIC DNA]</scope>
    <source>
        <strain>SBW25</strain>
    </source>
</reference>
<name>CYSZ_PSEFS</name>
<proteinExistence type="inferred from homology"/>